<accession>Q4IJH1</accession>
<accession>A0A0E0RUP5</accession>
<accession>V6R2F2</accession>
<dbReference type="EC" id="3.6.4.13"/>
<dbReference type="EMBL" id="DS231663">
    <property type="protein sequence ID" value="ESU08102.1"/>
    <property type="molecule type" value="Genomic_DNA"/>
</dbReference>
<dbReference type="EMBL" id="HG970332">
    <property type="protein sequence ID" value="CEF74970.1"/>
    <property type="molecule type" value="Genomic_DNA"/>
</dbReference>
<dbReference type="RefSeq" id="XP_011318587.1">
    <property type="nucleotide sequence ID" value="XM_011320285.1"/>
</dbReference>
<dbReference type="SMR" id="Q4IJH1"/>
<dbReference type="FunCoup" id="Q4IJH1">
    <property type="interactions" value="387"/>
</dbReference>
<dbReference type="STRING" id="229533.Q4IJH1"/>
<dbReference type="GeneID" id="23550003"/>
<dbReference type="KEGG" id="fgr:FGSG_02637"/>
<dbReference type="VEuPathDB" id="FungiDB:FGRAMPH1_01G06331"/>
<dbReference type="eggNOG" id="KOG0331">
    <property type="taxonomic scope" value="Eukaryota"/>
</dbReference>
<dbReference type="HOGENOM" id="CLU_003041_1_5_1"/>
<dbReference type="InParanoid" id="Q4IJH1"/>
<dbReference type="OrthoDB" id="112882at110618"/>
<dbReference type="Proteomes" id="UP000070720">
    <property type="component" value="Chromosome 1"/>
</dbReference>
<dbReference type="GO" id="GO:0005730">
    <property type="term" value="C:nucleolus"/>
    <property type="evidence" value="ECO:0007669"/>
    <property type="project" value="UniProtKB-SubCell"/>
</dbReference>
<dbReference type="GO" id="GO:0005524">
    <property type="term" value="F:ATP binding"/>
    <property type="evidence" value="ECO:0007669"/>
    <property type="project" value="UniProtKB-KW"/>
</dbReference>
<dbReference type="GO" id="GO:0016887">
    <property type="term" value="F:ATP hydrolysis activity"/>
    <property type="evidence" value="ECO:0007669"/>
    <property type="project" value="RHEA"/>
</dbReference>
<dbReference type="GO" id="GO:0003723">
    <property type="term" value="F:RNA binding"/>
    <property type="evidence" value="ECO:0007669"/>
    <property type="project" value="UniProtKB-KW"/>
</dbReference>
<dbReference type="GO" id="GO:0003724">
    <property type="term" value="F:RNA helicase activity"/>
    <property type="evidence" value="ECO:0007669"/>
    <property type="project" value="UniProtKB-EC"/>
</dbReference>
<dbReference type="GO" id="GO:0006364">
    <property type="term" value="P:rRNA processing"/>
    <property type="evidence" value="ECO:0007669"/>
    <property type="project" value="UniProtKB-KW"/>
</dbReference>
<dbReference type="CDD" id="cd00268">
    <property type="entry name" value="DEADc"/>
    <property type="match status" value="1"/>
</dbReference>
<dbReference type="CDD" id="cd18787">
    <property type="entry name" value="SF2_C_DEAD"/>
    <property type="match status" value="1"/>
</dbReference>
<dbReference type="FunFam" id="3.40.50.300:FF:000008">
    <property type="entry name" value="ATP-dependent RNA helicase RhlB"/>
    <property type="match status" value="1"/>
</dbReference>
<dbReference type="Gene3D" id="3.40.50.300">
    <property type="entry name" value="P-loop containing nucleotide triphosphate hydrolases"/>
    <property type="match status" value="2"/>
</dbReference>
<dbReference type="InterPro" id="IPR011545">
    <property type="entry name" value="DEAD/DEAH_box_helicase_dom"/>
</dbReference>
<dbReference type="InterPro" id="IPR014001">
    <property type="entry name" value="Helicase_ATP-bd"/>
</dbReference>
<dbReference type="InterPro" id="IPR001650">
    <property type="entry name" value="Helicase_C-like"/>
</dbReference>
<dbReference type="InterPro" id="IPR027417">
    <property type="entry name" value="P-loop_NTPase"/>
</dbReference>
<dbReference type="InterPro" id="IPR000629">
    <property type="entry name" value="RNA-helicase_DEAD-box_CS"/>
</dbReference>
<dbReference type="PANTHER" id="PTHR47958">
    <property type="entry name" value="ATP-DEPENDENT RNA HELICASE DBP3"/>
    <property type="match status" value="1"/>
</dbReference>
<dbReference type="Pfam" id="PF00270">
    <property type="entry name" value="DEAD"/>
    <property type="match status" value="1"/>
</dbReference>
<dbReference type="Pfam" id="PF00271">
    <property type="entry name" value="Helicase_C"/>
    <property type="match status" value="1"/>
</dbReference>
<dbReference type="SMART" id="SM00487">
    <property type="entry name" value="DEXDc"/>
    <property type="match status" value="1"/>
</dbReference>
<dbReference type="SMART" id="SM00490">
    <property type="entry name" value="HELICc"/>
    <property type="match status" value="1"/>
</dbReference>
<dbReference type="SUPFAM" id="SSF52540">
    <property type="entry name" value="P-loop containing nucleoside triphosphate hydrolases"/>
    <property type="match status" value="1"/>
</dbReference>
<dbReference type="PROSITE" id="PS00039">
    <property type="entry name" value="DEAD_ATP_HELICASE"/>
    <property type="match status" value="1"/>
</dbReference>
<dbReference type="PROSITE" id="PS51192">
    <property type="entry name" value="HELICASE_ATP_BIND_1"/>
    <property type="match status" value="1"/>
</dbReference>
<dbReference type="PROSITE" id="PS51194">
    <property type="entry name" value="HELICASE_CTER"/>
    <property type="match status" value="1"/>
</dbReference>
<dbReference type="PROSITE" id="PS51195">
    <property type="entry name" value="Q_MOTIF"/>
    <property type="match status" value="1"/>
</dbReference>
<feature type="chain" id="PRO_0000232179" description="ATP-dependent RNA helicase DBP3">
    <location>
        <begin position="1"/>
        <end position="581"/>
    </location>
</feature>
<feature type="domain" description="Helicase ATP-binding" evidence="2">
    <location>
        <begin position="192"/>
        <end position="365"/>
    </location>
</feature>
<feature type="domain" description="Helicase C-terminal" evidence="3">
    <location>
        <begin position="402"/>
        <end position="551"/>
    </location>
</feature>
<feature type="region of interest" description="Disordered" evidence="4">
    <location>
        <begin position="1"/>
        <end position="118"/>
    </location>
</feature>
<feature type="short sequence motif" description="Q motif">
    <location>
        <begin position="160"/>
        <end position="189"/>
    </location>
</feature>
<feature type="short sequence motif" description="DEAD box">
    <location>
        <begin position="311"/>
        <end position="314"/>
    </location>
</feature>
<feature type="compositionally biased region" description="Basic and acidic residues" evidence="4">
    <location>
        <begin position="7"/>
        <end position="35"/>
    </location>
</feature>
<feature type="compositionally biased region" description="Basic and acidic residues" evidence="4">
    <location>
        <begin position="53"/>
        <end position="62"/>
    </location>
</feature>
<feature type="compositionally biased region" description="Basic residues" evidence="4">
    <location>
        <begin position="63"/>
        <end position="73"/>
    </location>
</feature>
<feature type="compositionally biased region" description="Low complexity" evidence="4">
    <location>
        <begin position="80"/>
        <end position="89"/>
    </location>
</feature>
<feature type="compositionally biased region" description="Low complexity" evidence="4">
    <location>
        <begin position="106"/>
        <end position="118"/>
    </location>
</feature>
<feature type="binding site" evidence="2">
    <location>
        <begin position="205"/>
        <end position="212"/>
    </location>
    <ligand>
        <name>ATP</name>
        <dbReference type="ChEBI" id="CHEBI:30616"/>
    </ligand>
</feature>
<sequence length="581" mass="63857">MAATKHSLADSEDRPTKKTKVDSEEKARLKAEKRERKEKKKSQESEPSAENSDADRAAEKERKKAKKAKKLEKKQKLAEAEASAEPAAEVSDEAPKKSKKEKKTTTTEASSNSEAPSSGSYIQTIALSNVPQAEIDEFLSKNEIHITDPKTENVTLRPVLEFHQLPATNLLEKKPSPFANYKAPTPIQSASWPFTLSGRDVIGVAETGSGKTMAFALPCVEAISALKHKHTKAVVVSPTRELAMQTYEQMASVAALNRMKCVCLYGGASKDDQRNLLNRGADIIVATPGRLKDFMSDGTVDLSHSAFAVLDEADRMLDKGFEEDIKMILSSCPPREKRQTLMFTATWPQSVQTLAATFMVSPVKIAIGSGGKETAGGAVELQANARISQSVEVLEPRGKEFRLLEVLKEHQQGSKKNDRILVFCLYKKEATRIENFLSRKGIRVGGIHGDLRQEQRTRSLEAFKSGQTPVLVATDVAARGLDIPEVKLVINVTFPLTIEDYVHRIGRTGRAGKTGQAITFFTVEDKSHSGSLVNILRGANQPVPEDLLKFGTTVKKKAHDMYGAFFKDVDMNAKSTKITFD</sequence>
<evidence type="ECO:0000250" key="1"/>
<evidence type="ECO:0000255" key="2">
    <source>
        <dbReference type="PROSITE-ProRule" id="PRU00541"/>
    </source>
</evidence>
<evidence type="ECO:0000255" key="3">
    <source>
        <dbReference type="PROSITE-ProRule" id="PRU00542"/>
    </source>
</evidence>
<evidence type="ECO:0000256" key="4">
    <source>
        <dbReference type="SAM" id="MobiDB-lite"/>
    </source>
</evidence>
<evidence type="ECO:0000305" key="5"/>
<protein>
    <recommendedName>
        <fullName>ATP-dependent RNA helicase DBP3</fullName>
        <ecNumber>3.6.4.13</ecNumber>
    </recommendedName>
</protein>
<name>DBP3_GIBZE</name>
<gene>
    <name type="primary">DBP3</name>
    <name type="ORF">FGRRES_02637</name>
    <name type="ORF">FGSG_02637</name>
</gene>
<reference key="1">
    <citation type="journal article" date="2007" name="Science">
        <title>The Fusarium graminearum genome reveals a link between localized polymorphism and pathogen specialization.</title>
        <authorList>
            <person name="Cuomo C.A."/>
            <person name="Gueldener U."/>
            <person name="Xu J.-R."/>
            <person name="Trail F."/>
            <person name="Turgeon B.G."/>
            <person name="Di Pietro A."/>
            <person name="Walton J.D."/>
            <person name="Ma L.-J."/>
            <person name="Baker S.E."/>
            <person name="Rep M."/>
            <person name="Adam G."/>
            <person name="Antoniw J."/>
            <person name="Baldwin T."/>
            <person name="Calvo S.E."/>
            <person name="Chang Y.-L."/>
            <person name="DeCaprio D."/>
            <person name="Gale L.R."/>
            <person name="Gnerre S."/>
            <person name="Goswami R.S."/>
            <person name="Hammond-Kosack K."/>
            <person name="Harris L.J."/>
            <person name="Hilburn K."/>
            <person name="Kennell J.C."/>
            <person name="Kroken S."/>
            <person name="Magnuson J.K."/>
            <person name="Mannhaupt G."/>
            <person name="Mauceli E.W."/>
            <person name="Mewes H.-W."/>
            <person name="Mitterbauer R."/>
            <person name="Muehlbauer G."/>
            <person name="Muensterkoetter M."/>
            <person name="Nelson D."/>
            <person name="O'Donnell K."/>
            <person name="Ouellet T."/>
            <person name="Qi W."/>
            <person name="Quesneville H."/>
            <person name="Roncero M.I.G."/>
            <person name="Seong K.-Y."/>
            <person name="Tetko I.V."/>
            <person name="Urban M."/>
            <person name="Waalwijk C."/>
            <person name="Ward T.J."/>
            <person name="Yao J."/>
            <person name="Birren B.W."/>
            <person name="Kistler H.C."/>
        </authorList>
    </citation>
    <scope>NUCLEOTIDE SEQUENCE [LARGE SCALE GENOMIC DNA]</scope>
    <source>
        <strain>ATCC MYA-4620 / CBS 123657 / FGSC 9075 / NRRL 31084 / PH-1</strain>
    </source>
</reference>
<reference key="2">
    <citation type="journal article" date="2010" name="Nature">
        <title>Comparative genomics reveals mobile pathogenicity chromosomes in Fusarium.</title>
        <authorList>
            <person name="Ma L.-J."/>
            <person name="van der Does H.C."/>
            <person name="Borkovich K.A."/>
            <person name="Coleman J.J."/>
            <person name="Daboussi M.-J."/>
            <person name="Di Pietro A."/>
            <person name="Dufresne M."/>
            <person name="Freitag M."/>
            <person name="Grabherr M."/>
            <person name="Henrissat B."/>
            <person name="Houterman P.M."/>
            <person name="Kang S."/>
            <person name="Shim W.-B."/>
            <person name="Woloshuk C."/>
            <person name="Xie X."/>
            <person name="Xu J.-R."/>
            <person name="Antoniw J."/>
            <person name="Baker S.E."/>
            <person name="Bluhm B.H."/>
            <person name="Breakspear A."/>
            <person name="Brown D.W."/>
            <person name="Butchko R.A.E."/>
            <person name="Chapman S."/>
            <person name="Coulson R."/>
            <person name="Coutinho P.M."/>
            <person name="Danchin E.G.J."/>
            <person name="Diener A."/>
            <person name="Gale L.R."/>
            <person name="Gardiner D.M."/>
            <person name="Goff S."/>
            <person name="Hammond-Kosack K.E."/>
            <person name="Hilburn K."/>
            <person name="Hua-Van A."/>
            <person name="Jonkers W."/>
            <person name="Kazan K."/>
            <person name="Kodira C.D."/>
            <person name="Koehrsen M."/>
            <person name="Kumar L."/>
            <person name="Lee Y.-H."/>
            <person name="Li L."/>
            <person name="Manners J.M."/>
            <person name="Miranda-Saavedra D."/>
            <person name="Mukherjee M."/>
            <person name="Park G."/>
            <person name="Park J."/>
            <person name="Park S.-Y."/>
            <person name="Proctor R.H."/>
            <person name="Regev A."/>
            <person name="Ruiz-Roldan M.C."/>
            <person name="Sain D."/>
            <person name="Sakthikumar S."/>
            <person name="Sykes S."/>
            <person name="Schwartz D.C."/>
            <person name="Turgeon B.G."/>
            <person name="Wapinski I."/>
            <person name="Yoder O."/>
            <person name="Young S."/>
            <person name="Zeng Q."/>
            <person name="Zhou S."/>
            <person name="Galagan J."/>
            <person name="Cuomo C.A."/>
            <person name="Kistler H.C."/>
            <person name="Rep M."/>
        </authorList>
    </citation>
    <scope>GENOME REANNOTATION</scope>
    <source>
        <strain>ATCC MYA-4620 / CBS 123657 / FGSC 9075 / NRRL 31084 / PH-1</strain>
    </source>
</reference>
<reference key="3">
    <citation type="journal article" date="2015" name="BMC Genomics">
        <title>The completed genome sequence of the pathogenic ascomycete fungus Fusarium graminearum.</title>
        <authorList>
            <person name="King R."/>
            <person name="Urban M."/>
            <person name="Hammond-Kosack M.C.U."/>
            <person name="Hassani-Pak K."/>
            <person name="Hammond-Kosack K.E."/>
        </authorList>
    </citation>
    <scope>NUCLEOTIDE SEQUENCE [LARGE SCALE GENOMIC DNA]</scope>
    <source>
        <strain>ATCC MYA-4620 / CBS 123657 / FGSC 9075 / NRRL 31084 / PH-1</strain>
    </source>
</reference>
<proteinExistence type="inferred from homology"/>
<keyword id="KW-0067">ATP-binding</keyword>
<keyword id="KW-0347">Helicase</keyword>
<keyword id="KW-0378">Hydrolase</keyword>
<keyword id="KW-0547">Nucleotide-binding</keyword>
<keyword id="KW-0539">Nucleus</keyword>
<keyword id="KW-1185">Reference proteome</keyword>
<keyword id="KW-0690">Ribosome biogenesis</keyword>
<keyword id="KW-0694">RNA-binding</keyword>
<keyword id="KW-0698">rRNA processing</keyword>
<organism>
    <name type="scientific">Gibberella zeae (strain ATCC MYA-4620 / CBS 123657 / FGSC 9075 / NRRL 31084 / PH-1)</name>
    <name type="common">Wheat head blight fungus</name>
    <name type="synonym">Fusarium graminearum</name>
    <dbReference type="NCBI Taxonomy" id="229533"/>
    <lineage>
        <taxon>Eukaryota</taxon>
        <taxon>Fungi</taxon>
        <taxon>Dikarya</taxon>
        <taxon>Ascomycota</taxon>
        <taxon>Pezizomycotina</taxon>
        <taxon>Sordariomycetes</taxon>
        <taxon>Hypocreomycetidae</taxon>
        <taxon>Hypocreales</taxon>
        <taxon>Nectriaceae</taxon>
        <taxon>Fusarium</taxon>
    </lineage>
</organism>
<comment type="function">
    <text evidence="1">ATP-dependent RNA helicase required for 60S ribosomal subunit synthesis. Involved in efficient pre-rRNA processing, predominantly at site A3, which is necessary for the normal formation of 25S and 5.8S rRNAs (By similarity).</text>
</comment>
<comment type="catalytic activity">
    <reaction>
        <text>ATP + H2O = ADP + phosphate + H(+)</text>
        <dbReference type="Rhea" id="RHEA:13065"/>
        <dbReference type="ChEBI" id="CHEBI:15377"/>
        <dbReference type="ChEBI" id="CHEBI:15378"/>
        <dbReference type="ChEBI" id="CHEBI:30616"/>
        <dbReference type="ChEBI" id="CHEBI:43474"/>
        <dbReference type="ChEBI" id="CHEBI:456216"/>
        <dbReference type="EC" id="3.6.4.13"/>
    </reaction>
</comment>
<comment type="subcellular location">
    <subcellularLocation>
        <location evidence="1">Nucleus</location>
        <location evidence="1">Nucleolus</location>
    </subcellularLocation>
</comment>
<comment type="domain">
    <text>The Q motif is unique to and characteristic of the DEAD box family of RNA helicases and controls ATP binding and hydrolysis.</text>
</comment>
<comment type="similarity">
    <text evidence="5">Belongs to the DEAD box helicase family. DDX5/DBP2 subfamily.</text>
</comment>